<dbReference type="EMBL" id="AM906170">
    <property type="protein sequence ID" value="CAP20084.1"/>
    <property type="molecule type" value="mRNA"/>
</dbReference>
<dbReference type="EMBL" id="BX001012">
    <property type="status" value="NOT_ANNOTATED_CDS"/>
    <property type="molecule type" value="Genomic_DNA"/>
</dbReference>
<dbReference type="RefSeq" id="NP_001106904.1">
    <property type="nucleotide sequence ID" value="NM_001113433.1"/>
</dbReference>
<dbReference type="SMR" id="B0BF33"/>
<dbReference type="FunCoup" id="B0BF33">
    <property type="interactions" value="1429"/>
</dbReference>
<dbReference type="STRING" id="7955.ENSDARP00000035112"/>
<dbReference type="PaxDb" id="7955-ENSDARP00000035112"/>
<dbReference type="Ensembl" id="ENSDART00000035899">
    <property type="protein sequence ID" value="ENSDARP00000035112"/>
    <property type="gene ID" value="ENSDARG00000023026"/>
</dbReference>
<dbReference type="GeneID" id="568060"/>
<dbReference type="KEGG" id="dre:568060"/>
<dbReference type="AGR" id="ZFIN:ZDB-GENE-041210-167"/>
<dbReference type="CTD" id="5318"/>
<dbReference type="ZFIN" id="ZDB-GENE-041210-167">
    <property type="gene designation" value="pkp2"/>
</dbReference>
<dbReference type="eggNOG" id="KOG1048">
    <property type="taxonomic scope" value="Eukaryota"/>
</dbReference>
<dbReference type="HOGENOM" id="CLU_009111_3_0_1"/>
<dbReference type="InParanoid" id="B0BF33"/>
<dbReference type="OMA" id="PEHKEQP"/>
<dbReference type="OrthoDB" id="3245100at2759"/>
<dbReference type="TreeFam" id="TF321877"/>
<dbReference type="Reactome" id="R-DRE-6805567">
    <property type="pathway name" value="Keratinization"/>
</dbReference>
<dbReference type="Reactome" id="R-DRE-6809371">
    <property type="pathway name" value="Formation of the cornified envelope"/>
</dbReference>
<dbReference type="PRO" id="PR:B0BF33"/>
<dbReference type="Proteomes" id="UP000000437">
    <property type="component" value="Chromosome 4"/>
</dbReference>
<dbReference type="Bgee" id="ENSDARG00000023026">
    <property type="expression patterns" value="Expressed in liver and 28 other cell types or tissues"/>
</dbReference>
<dbReference type="ExpressionAtlas" id="B0BF33">
    <property type="expression patterns" value="baseline"/>
</dbReference>
<dbReference type="GO" id="GO:0005912">
    <property type="term" value="C:adherens junction"/>
    <property type="evidence" value="ECO:0000318"/>
    <property type="project" value="GO_Central"/>
</dbReference>
<dbReference type="GO" id="GO:0005737">
    <property type="term" value="C:cytoplasm"/>
    <property type="evidence" value="ECO:0000318"/>
    <property type="project" value="GO_Central"/>
</dbReference>
<dbReference type="GO" id="GO:0030057">
    <property type="term" value="C:desmosome"/>
    <property type="evidence" value="ECO:0007669"/>
    <property type="project" value="UniProtKB-SubCell"/>
</dbReference>
<dbReference type="GO" id="GO:0014704">
    <property type="term" value="C:intercalated disc"/>
    <property type="evidence" value="ECO:0000318"/>
    <property type="project" value="GO_Central"/>
</dbReference>
<dbReference type="GO" id="GO:0005634">
    <property type="term" value="C:nucleus"/>
    <property type="evidence" value="ECO:0000318"/>
    <property type="project" value="GO_Central"/>
</dbReference>
<dbReference type="GO" id="GO:0005886">
    <property type="term" value="C:plasma membrane"/>
    <property type="evidence" value="ECO:0000318"/>
    <property type="project" value="GO_Central"/>
</dbReference>
<dbReference type="GO" id="GO:0045296">
    <property type="term" value="F:cadherin binding"/>
    <property type="evidence" value="ECO:0000318"/>
    <property type="project" value="GO_Central"/>
</dbReference>
<dbReference type="GO" id="GO:0098609">
    <property type="term" value="P:cell-cell adhesion"/>
    <property type="evidence" value="ECO:0000318"/>
    <property type="project" value="GO_Central"/>
</dbReference>
<dbReference type="GO" id="GO:0002934">
    <property type="term" value="P:desmosome organization"/>
    <property type="evidence" value="ECO:0000315"/>
    <property type="project" value="ZFIN"/>
</dbReference>
<dbReference type="GO" id="GO:0007507">
    <property type="term" value="P:heart development"/>
    <property type="evidence" value="ECO:0000315"/>
    <property type="project" value="ZFIN"/>
</dbReference>
<dbReference type="GO" id="GO:0001947">
    <property type="term" value="P:heart looping"/>
    <property type="evidence" value="ECO:0000315"/>
    <property type="project" value="ZFIN"/>
</dbReference>
<dbReference type="GO" id="GO:0045110">
    <property type="term" value="P:intermediate filament bundle assembly"/>
    <property type="evidence" value="ECO:0000318"/>
    <property type="project" value="GO_Central"/>
</dbReference>
<dbReference type="GO" id="GO:0072659">
    <property type="term" value="P:protein localization to plasma membrane"/>
    <property type="evidence" value="ECO:0000318"/>
    <property type="project" value="GO_Central"/>
</dbReference>
<dbReference type="Gene3D" id="1.25.10.10">
    <property type="entry name" value="Leucine-rich Repeat Variant"/>
    <property type="match status" value="1"/>
</dbReference>
<dbReference type="InterPro" id="IPR011989">
    <property type="entry name" value="ARM-like"/>
</dbReference>
<dbReference type="InterPro" id="IPR016024">
    <property type="entry name" value="ARM-type_fold"/>
</dbReference>
<dbReference type="InterPro" id="IPR000225">
    <property type="entry name" value="Armadillo"/>
</dbReference>
<dbReference type="InterPro" id="IPR028435">
    <property type="entry name" value="Plakophilin/d_Catenin"/>
</dbReference>
<dbReference type="PANTHER" id="PTHR10372:SF25">
    <property type="entry name" value="PLAKOPHILIN-2"/>
    <property type="match status" value="1"/>
</dbReference>
<dbReference type="PANTHER" id="PTHR10372">
    <property type="entry name" value="PLAKOPHILLIN-RELATED"/>
    <property type="match status" value="1"/>
</dbReference>
<dbReference type="Pfam" id="PF00514">
    <property type="entry name" value="Arm"/>
    <property type="match status" value="2"/>
</dbReference>
<dbReference type="SMART" id="SM00185">
    <property type="entry name" value="ARM"/>
    <property type="match status" value="7"/>
</dbReference>
<dbReference type="SUPFAM" id="SSF48371">
    <property type="entry name" value="ARM repeat"/>
    <property type="match status" value="1"/>
</dbReference>
<dbReference type="PROSITE" id="PS50176">
    <property type="entry name" value="ARM_REPEAT"/>
    <property type="match status" value="1"/>
</dbReference>
<keyword id="KW-0130">Cell adhesion</keyword>
<keyword id="KW-0965">Cell junction</keyword>
<keyword id="KW-0963">Cytoplasm</keyword>
<keyword id="KW-0539">Nucleus</keyword>
<keyword id="KW-1185">Reference proteome</keyword>
<keyword id="KW-0677">Repeat</keyword>
<protein>
    <recommendedName>
        <fullName evidence="8">Plakophilin-2</fullName>
    </recommendedName>
</protein>
<accession>B0BF33</accession>
<accession>A0A8M1NGT8</accession>
<evidence type="ECO:0000250" key="1">
    <source>
        <dbReference type="UniProtKB" id="Q99959"/>
    </source>
</evidence>
<evidence type="ECO:0000255" key="2"/>
<evidence type="ECO:0000256" key="3">
    <source>
        <dbReference type="SAM" id="MobiDB-lite"/>
    </source>
</evidence>
<evidence type="ECO:0000269" key="4">
    <source>
    </source>
</evidence>
<evidence type="ECO:0000269" key="5">
    <source>
    </source>
</evidence>
<evidence type="ECO:0000305" key="6"/>
<evidence type="ECO:0000312" key="7">
    <source>
        <dbReference type="EMBL" id="CAP20084.1"/>
    </source>
</evidence>
<evidence type="ECO:0000312" key="8">
    <source>
        <dbReference type="ZFIN" id="ZDB-GENE-041210-167"/>
    </source>
</evidence>
<name>PKP2_DANRE</name>
<organism evidence="7">
    <name type="scientific">Danio rerio</name>
    <name type="common">Zebrafish</name>
    <name type="synonym">Brachydanio rerio</name>
    <dbReference type="NCBI Taxonomy" id="7955"/>
    <lineage>
        <taxon>Eukaryota</taxon>
        <taxon>Metazoa</taxon>
        <taxon>Chordata</taxon>
        <taxon>Craniata</taxon>
        <taxon>Vertebrata</taxon>
        <taxon>Euteleostomi</taxon>
        <taxon>Actinopterygii</taxon>
        <taxon>Neopterygii</taxon>
        <taxon>Teleostei</taxon>
        <taxon>Ostariophysi</taxon>
        <taxon>Cypriniformes</taxon>
        <taxon>Danionidae</taxon>
        <taxon>Danioninae</taxon>
        <taxon>Danio</taxon>
    </lineage>
</organism>
<feature type="chain" id="PRO_0000457080" description="Plakophilin-2">
    <location>
        <begin position="1"/>
        <end position="815"/>
    </location>
</feature>
<feature type="repeat" description="ARM 1" evidence="2">
    <location>
        <begin position="317"/>
        <end position="357"/>
    </location>
</feature>
<feature type="repeat" description="ARM 2" evidence="2">
    <location>
        <begin position="360"/>
        <end position="399"/>
    </location>
</feature>
<feature type="repeat" description="ARM 3" evidence="2">
    <location>
        <begin position="402"/>
        <end position="442"/>
    </location>
</feature>
<feature type="repeat" description="ARM 4" evidence="2">
    <location>
        <begin position="457"/>
        <end position="498"/>
    </location>
</feature>
<feature type="repeat" description="ARM 5" evidence="2">
    <location>
        <begin position="501"/>
        <end position="547"/>
    </location>
</feature>
<feature type="repeat" description="ARM 6" evidence="2">
    <location>
        <begin position="604"/>
        <end position="644"/>
    </location>
</feature>
<feature type="repeat" description="ARM 7" evidence="2">
    <location>
        <begin position="652"/>
        <end position="691"/>
    </location>
</feature>
<feature type="repeat" description="ARM 8" evidence="2">
    <location>
        <begin position="693"/>
        <end position="737"/>
    </location>
</feature>
<feature type="repeat" description="ARM 9" evidence="2">
    <location>
        <begin position="740"/>
        <end position="783"/>
    </location>
</feature>
<feature type="region of interest" description="Disordered" evidence="3">
    <location>
        <begin position="1"/>
        <end position="31"/>
    </location>
</feature>
<feature type="region of interest" description="Disordered" evidence="3">
    <location>
        <begin position="76"/>
        <end position="105"/>
    </location>
</feature>
<feature type="compositionally biased region" description="Basic and acidic residues" evidence="3">
    <location>
        <begin position="1"/>
        <end position="12"/>
    </location>
</feature>
<feature type="compositionally biased region" description="Polar residues" evidence="3">
    <location>
        <begin position="13"/>
        <end position="25"/>
    </location>
</feature>
<feature type="compositionally biased region" description="Low complexity" evidence="3">
    <location>
        <begin position="91"/>
        <end position="105"/>
    </location>
</feature>
<reference evidence="7" key="1">
    <citation type="journal article" date="2008" name="Biochem. Biophys. Res. Commun.">
        <title>Molecular cloning and developmental expression of plakophilin 2 in zebrafish.</title>
        <authorList>
            <person name="Moriarty M.A."/>
            <person name="Martin E.D."/>
            <person name="Byrnes L."/>
            <person name="Grealy M."/>
        </authorList>
    </citation>
    <scope>NUCLEOTIDE SEQUENCE [MRNA]</scope>
    <scope>DEVELOPMENTAL STAGE</scope>
</reference>
<reference key="2">
    <citation type="journal article" date="2013" name="Nature">
        <title>The zebrafish reference genome sequence and its relationship to the human genome.</title>
        <authorList>
            <person name="Howe K."/>
            <person name="Clark M.D."/>
            <person name="Torroja C.F."/>
            <person name="Torrance J."/>
            <person name="Berthelot C."/>
            <person name="Muffato M."/>
            <person name="Collins J.E."/>
            <person name="Humphray S."/>
            <person name="McLaren K."/>
            <person name="Matthews L."/>
            <person name="McLaren S."/>
            <person name="Sealy I."/>
            <person name="Caccamo M."/>
            <person name="Churcher C."/>
            <person name="Scott C."/>
            <person name="Barrett J.C."/>
            <person name="Koch R."/>
            <person name="Rauch G.J."/>
            <person name="White S."/>
            <person name="Chow W."/>
            <person name="Kilian B."/>
            <person name="Quintais L.T."/>
            <person name="Guerra-Assuncao J.A."/>
            <person name="Zhou Y."/>
            <person name="Gu Y."/>
            <person name="Yen J."/>
            <person name="Vogel J.H."/>
            <person name="Eyre T."/>
            <person name="Redmond S."/>
            <person name="Banerjee R."/>
            <person name="Chi J."/>
            <person name="Fu B."/>
            <person name="Langley E."/>
            <person name="Maguire S.F."/>
            <person name="Laird G.K."/>
            <person name="Lloyd D."/>
            <person name="Kenyon E."/>
            <person name="Donaldson S."/>
            <person name="Sehra H."/>
            <person name="Almeida-King J."/>
            <person name="Loveland J."/>
            <person name="Trevanion S."/>
            <person name="Jones M."/>
            <person name="Quail M."/>
            <person name="Willey D."/>
            <person name="Hunt A."/>
            <person name="Burton J."/>
            <person name="Sims S."/>
            <person name="McLay K."/>
            <person name="Plumb B."/>
            <person name="Davis J."/>
            <person name="Clee C."/>
            <person name="Oliver K."/>
            <person name="Clark R."/>
            <person name="Riddle C."/>
            <person name="Elliot D."/>
            <person name="Threadgold G."/>
            <person name="Harden G."/>
            <person name="Ware D."/>
            <person name="Begum S."/>
            <person name="Mortimore B."/>
            <person name="Kerry G."/>
            <person name="Heath P."/>
            <person name="Phillimore B."/>
            <person name="Tracey A."/>
            <person name="Corby N."/>
            <person name="Dunn M."/>
            <person name="Johnson C."/>
            <person name="Wood J."/>
            <person name="Clark S."/>
            <person name="Pelan S."/>
            <person name="Griffiths G."/>
            <person name="Smith M."/>
            <person name="Glithero R."/>
            <person name="Howden P."/>
            <person name="Barker N."/>
            <person name="Lloyd C."/>
            <person name="Stevens C."/>
            <person name="Harley J."/>
            <person name="Holt K."/>
            <person name="Panagiotidis G."/>
            <person name="Lovell J."/>
            <person name="Beasley H."/>
            <person name="Henderson C."/>
            <person name="Gordon D."/>
            <person name="Auger K."/>
            <person name="Wright D."/>
            <person name="Collins J."/>
            <person name="Raisen C."/>
            <person name="Dyer L."/>
            <person name="Leung K."/>
            <person name="Robertson L."/>
            <person name="Ambridge K."/>
            <person name="Leongamornlert D."/>
            <person name="McGuire S."/>
            <person name="Gilderthorp R."/>
            <person name="Griffiths C."/>
            <person name="Manthravadi D."/>
            <person name="Nichol S."/>
            <person name="Barker G."/>
            <person name="Whitehead S."/>
            <person name="Kay M."/>
            <person name="Brown J."/>
            <person name="Murnane C."/>
            <person name="Gray E."/>
            <person name="Humphries M."/>
            <person name="Sycamore N."/>
            <person name="Barker D."/>
            <person name="Saunders D."/>
            <person name="Wallis J."/>
            <person name="Babbage A."/>
            <person name="Hammond S."/>
            <person name="Mashreghi-Mohammadi M."/>
            <person name="Barr L."/>
            <person name="Martin S."/>
            <person name="Wray P."/>
            <person name="Ellington A."/>
            <person name="Matthews N."/>
            <person name="Ellwood M."/>
            <person name="Woodmansey R."/>
            <person name="Clark G."/>
            <person name="Cooper J."/>
            <person name="Tromans A."/>
            <person name="Grafham D."/>
            <person name="Skuce C."/>
            <person name="Pandian R."/>
            <person name="Andrews R."/>
            <person name="Harrison E."/>
            <person name="Kimberley A."/>
            <person name="Garnett J."/>
            <person name="Fosker N."/>
            <person name="Hall R."/>
            <person name="Garner P."/>
            <person name="Kelly D."/>
            <person name="Bird C."/>
            <person name="Palmer S."/>
            <person name="Gehring I."/>
            <person name="Berger A."/>
            <person name="Dooley C.M."/>
            <person name="Ersan-Urun Z."/>
            <person name="Eser C."/>
            <person name="Geiger H."/>
            <person name="Geisler M."/>
            <person name="Karotki L."/>
            <person name="Kirn A."/>
            <person name="Konantz J."/>
            <person name="Konantz M."/>
            <person name="Oberlander M."/>
            <person name="Rudolph-Geiger S."/>
            <person name="Teucke M."/>
            <person name="Lanz C."/>
            <person name="Raddatz G."/>
            <person name="Osoegawa K."/>
            <person name="Zhu B."/>
            <person name="Rapp A."/>
            <person name="Widaa S."/>
            <person name="Langford C."/>
            <person name="Yang F."/>
            <person name="Schuster S.C."/>
            <person name="Carter N.P."/>
            <person name="Harrow J."/>
            <person name="Ning Z."/>
            <person name="Herrero J."/>
            <person name="Searle S.M."/>
            <person name="Enright A."/>
            <person name="Geisler R."/>
            <person name="Plasterk R.H."/>
            <person name="Lee C."/>
            <person name="Westerfield M."/>
            <person name="de Jong P.J."/>
            <person name="Zon L.I."/>
            <person name="Postlethwait J.H."/>
            <person name="Nusslein-Volhard C."/>
            <person name="Hubbard T.J."/>
            <person name="Roest Crollius H."/>
            <person name="Rogers J."/>
            <person name="Stemple D.L."/>
        </authorList>
    </citation>
    <scope>NUCLEOTIDE SEQUENCE [LARGE SCALE GENOMIC DNA]</scope>
    <source>
        <strain>Tuebingen</strain>
    </source>
</reference>
<reference key="3">
    <citation type="journal article" date="2012" name="Int. J. Dev. Biol.">
        <title>Loss of plakophilin 2 disrupts heart development in zebrafish.</title>
        <authorList>
            <person name="Moriarty M.A."/>
            <person name="Ryan R."/>
            <person name="Lalor P."/>
            <person name="Dockery P."/>
            <person name="Byrnes L."/>
            <person name="Grealy M."/>
        </authorList>
    </citation>
    <scope>FUNCTION</scope>
    <scope>DISRUPTION PHENOTYPE</scope>
</reference>
<gene>
    <name evidence="8" type="primary">pkp2</name>
</gene>
<proteinExistence type="evidence at transcript level"/>
<sequence length="815" mass="90767">MLKPHPEHKEQPQDSFTPSGDSTPDASMAEERDFMRSVLPVYDSFHPEDSSLALPLANKLTLADAHRLNRLQQQVQLTLSRKKRKPKPADSSLAESQSSCQISSSSSLGSLHLKRTFSVNHEATRSLRMVDRSQWPSMEPPLFHRGYGSFRYTPKRAGLCLGSNSLTLPSAPTTSHFQMNKLPLRYAHSEVLRNPRFAGLSAATQIPSSPVYENPHTDDTDDVFLPSTSVERGRMESEKHTLQQTLCKQREGGFVALEQSENVSWQSRVRKPSLEFVAGRRPSQTGSLISMEEQSGSLGRIEKLEVKQHAVTTLTKKGKPGELSAEMTLKEAVNLLTQDNNMETQIAAANFIQNQCFNSPDAKRKILHLQGIPKLLKLMQNDSEELQWAAVSSLRNIVFENNENKMEVKDCEGLPVILRLLKINRDIETRRQLTGLLWNLSSHDLLKEHLSREAVKPLTDSVLVPCSGISEGEDPKLELLADPDIFYNATGCLRNLSSAGPDGRKVMRDCEGLIECVIYYIRGTIADYKPDDKATENCVCILHNLSYRFDCEVPRVDSPVAQKPKQTHTETSNPGCFIIKTPKNSAENLEADEDYPALEENGSPHGVEWLWSAITVRMYLSLIAVSTNQHTKQASIGTLQNLTACSGEISQAIAHFIVQKEGGLSQVKKLLQEAEKEELRISVSLLKNISRYRELHADIVKQVLPELVAILPNSDRNVEQPIEITVTICHILINLSQASASNTCAIINQGALPKIISISSKDNGFGPTRAGQAACVLLHTLWRHSELHSSFKKAGYRKTDFINNRTVKAVNSARE</sequence>
<comment type="function">
    <text evidence="5">Required for development of the heart, potentially via cell-cell adhesion and modulation of expression of cardiac precursor genes (PubMed:23124967). Plays a role in desmosome cell-cell junctions and their intracellular connectivity (PubMed:23124967).</text>
</comment>
<comment type="subcellular location">
    <subcellularLocation>
        <location evidence="1">Nucleus</location>
    </subcellularLocation>
    <subcellularLocation>
        <location evidence="1">Cell junction</location>
        <location evidence="1">Desmosome</location>
    </subcellularLocation>
    <subcellularLocation>
        <location evidence="1">Cell junction</location>
    </subcellularLocation>
    <subcellularLocation>
        <location evidence="1">Cytoplasm</location>
    </subcellularLocation>
</comment>
<comment type="developmental stage">
    <text evidence="4">Expressed in the epidermis from 2 hours post-fertilization (hpf) to 16 hpf (PubMed:18164260). Expression is then restricted to the anterior of the embryo, in particular epidermal tissues of the neural structures at 24 hpf to 72 hpf (PubMed:18164260). Expressed in the heart, tissue ventral to the head and yolk at 48 hpf (PubMed:18164260).</text>
</comment>
<comment type="disruption phenotype">
    <text evidence="5">Morpholino knockdown results in a range of cardiac phenotype severity from mild to severely affected (PubMed:23124967). Defects include slight to severe cardiac edema, blood pooling on the yolk, abnormal ventricles, heartstring and failure of cardiac looping (PubMed:23124967). Heart rate is decreased at 48 hours post-fertilization (48 hpf) from 138 beats per minute (bpm) to 110 (bpm), this decrease persists at 72 hpf (PubMed:23124967). Non-cardiac effects include kinked tail and disruption to the borders of anterior neural structures (PubMed:23124967). At 16 hpf abnormal expression and/or localization of cardiac precursor markers such as nkx2.5, lefty2, bmp4, spaw, lefty1 and tdgf1/oep (PubMed:23124967). Incomplete looping of the heart with displaced ventricle along the midline, above an enlarged atrium (PubMed:23124967). Expression of cardiac valve developmental proteins notch1b and bmp4 are abnormally expanded into the ventricle at 48 hpf (PubMed:23124967). The number of desmosomes is decreased at cell borders in the heart but those that are present show diminished intracellular elements and an increase in the intercellular gap width at 72 hpf (PubMed:23124967).</text>
</comment>
<comment type="similarity">
    <text evidence="6">Belongs to the beta-catenin family.</text>
</comment>